<proteinExistence type="inferred from homology"/>
<protein>
    <recommendedName>
        <fullName evidence="1">Chaperone protein HtpG</fullName>
    </recommendedName>
    <alternativeName>
        <fullName evidence="1">Heat shock protein HtpG</fullName>
    </alternativeName>
    <alternativeName>
        <fullName evidence="1">High temperature protein G</fullName>
    </alternativeName>
</protein>
<name>HTPG_PSEFS</name>
<gene>
    <name evidence="1" type="primary">htpG</name>
    <name type="ordered locus">PFLU_1830</name>
</gene>
<reference key="1">
    <citation type="journal article" date="2009" name="Genome Biol.">
        <title>Genomic and genetic analyses of diversity and plant interactions of Pseudomonas fluorescens.</title>
        <authorList>
            <person name="Silby M.W."/>
            <person name="Cerdeno-Tarraga A.M."/>
            <person name="Vernikos G.S."/>
            <person name="Giddens S.R."/>
            <person name="Jackson R.W."/>
            <person name="Preston G.M."/>
            <person name="Zhang X.-X."/>
            <person name="Moon C.D."/>
            <person name="Gehrig S.M."/>
            <person name="Godfrey S.A.C."/>
            <person name="Knight C.G."/>
            <person name="Malone J.G."/>
            <person name="Robinson Z."/>
            <person name="Spiers A.J."/>
            <person name="Harris S."/>
            <person name="Challis G.L."/>
            <person name="Yaxley A.M."/>
            <person name="Harris D."/>
            <person name="Seeger K."/>
            <person name="Murphy L."/>
            <person name="Rutter S."/>
            <person name="Squares R."/>
            <person name="Quail M.A."/>
            <person name="Saunders E."/>
            <person name="Mavromatis K."/>
            <person name="Brettin T.S."/>
            <person name="Bentley S.D."/>
            <person name="Hothersall J."/>
            <person name="Stephens E."/>
            <person name="Thomas C.M."/>
            <person name="Parkhill J."/>
            <person name="Levy S.B."/>
            <person name="Rainey P.B."/>
            <person name="Thomson N.R."/>
        </authorList>
    </citation>
    <scope>NUCLEOTIDE SEQUENCE [LARGE SCALE GENOMIC DNA]</scope>
    <source>
        <strain>SBW25</strain>
    </source>
</reference>
<comment type="function">
    <text evidence="1">Molecular chaperone. Has ATPase activity.</text>
</comment>
<comment type="subunit">
    <text evidence="1">Homodimer.</text>
</comment>
<comment type="subcellular location">
    <subcellularLocation>
        <location evidence="1">Cytoplasm</location>
    </subcellularLocation>
</comment>
<comment type="similarity">
    <text evidence="1">Belongs to the heat shock protein 90 family.</text>
</comment>
<organism>
    <name type="scientific">Pseudomonas fluorescens (strain SBW25)</name>
    <dbReference type="NCBI Taxonomy" id="216595"/>
    <lineage>
        <taxon>Bacteria</taxon>
        <taxon>Pseudomonadati</taxon>
        <taxon>Pseudomonadota</taxon>
        <taxon>Gammaproteobacteria</taxon>
        <taxon>Pseudomonadales</taxon>
        <taxon>Pseudomonadaceae</taxon>
        <taxon>Pseudomonas</taxon>
    </lineage>
</organism>
<feature type="chain" id="PRO_1000206569" description="Chaperone protein HtpG">
    <location>
        <begin position="1"/>
        <end position="636"/>
    </location>
</feature>
<feature type="region of interest" description="A; substrate-binding" evidence="1">
    <location>
        <begin position="1"/>
        <end position="344"/>
    </location>
</feature>
<feature type="region of interest" description="B" evidence="1">
    <location>
        <begin position="345"/>
        <end position="561"/>
    </location>
</feature>
<feature type="region of interest" description="C" evidence="1">
    <location>
        <begin position="562"/>
        <end position="636"/>
    </location>
</feature>
<sequence>MTMSVETQKETLGFQTEVKQLLHLMIHSLYSNKEIFLRELISNASDAVDKLRFEALSKPELLEGGAELKIRVSFDKDAKTVTLEDNGIGMSREDAITHLGTIAKSGTADFMKNLSGDQKKDSHLIGQFGVGFYSAFIVADKVEVFSRRAGLDASEGVHWSSKGEGEFEIATVDKADRGTRIVLHLKDGEDEFADGWRLRNIVKKYSDHIALPIELPKEQAAAEGEETPAQEWEVVNRASALWTRPRTEIKDEEYQEFYKHIGHDYENPLSWSHNKVEGKLEYSSLLYVPARAPFDLYQREAPKGLKLYVQRVFVMDQAESFLPLYLRFIKGVVDSNDLSLNVSREILQKDPIIDSMKSALTKRVLDMLEKLAKNEPEQYKGFWKNFGQVMKEGPAEDFANKEKIAGLLRFASTQGDDGEQVVSLAEYLARAKEGQDKIYYLTGETYAQVKNSPHLEVFRKKGIEVLLLTDRIDEWLMSYLNEFDGKSFVDVARGDLDLGNLDSEEEKKEAEEVAKSKEGLVERIKASLGDAVSEVRVSHRLTDSPAILAIGEQDLGMQMRQILEASGQKVPDSKPIFEFNPAHPLIEKLDGEQSEERFGDLSHILFDQAALAAGDSLKDPAAYVRRLNKLLVELSV</sequence>
<keyword id="KW-0067">ATP-binding</keyword>
<keyword id="KW-0143">Chaperone</keyword>
<keyword id="KW-0963">Cytoplasm</keyword>
<keyword id="KW-0547">Nucleotide-binding</keyword>
<keyword id="KW-0346">Stress response</keyword>
<accession>C3K6N7</accession>
<dbReference type="EMBL" id="AM181176">
    <property type="protein sequence ID" value="CAY48077.1"/>
    <property type="molecule type" value="Genomic_DNA"/>
</dbReference>
<dbReference type="SMR" id="C3K6N7"/>
<dbReference type="STRING" id="294.SRM1_01622"/>
<dbReference type="eggNOG" id="COG0326">
    <property type="taxonomic scope" value="Bacteria"/>
</dbReference>
<dbReference type="HOGENOM" id="CLU_006684_3_0_6"/>
<dbReference type="GO" id="GO:0005737">
    <property type="term" value="C:cytoplasm"/>
    <property type="evidence" value="ECO:0007669"/>
    <property type="project" value="UniProtKB-SubCell"/>
</dbReference>
<dbReference type="GO" id="GO:0005524">
    <property type="term" value="F:ATP binding"/>
    <property type="evidence" value="ECO:0007669"/>
    <property type="project" value="UniProtKB-UniRule"/>
</dbReference>
<dbReference type="GO" id="GO:0016887">
    <property type="term" value="F:ATP hydrolysis activity"/>
    <property type="evidence" value="ECO:0007669"/>
    <property type="project" value="InterPro"/>
</dbReference>
<dbReference type="GO" id="GO:0140662">
    <property type="term" value="F:ATP-dependent protein folding chaperone"/>
    <property type="evidence" value="ECO:0007669"/>
    <property type="project" value="InterPro"/>
</dbReference>
<dbReference type="GO" id="GO:0051082">
    <property type="term" value="F:unfolded protein binding"/>
    <property type="evidence" value="ECO:0007669"/>
    <property type="project" value="UniProtKB-UniRule"/>
</dbReference>
<dbReference type="CDD" id="cd16927">
    <property type="entry name" value="HATPase_Hsp90-like"/>
    <property type="match status" value="1"/>
</dbReference>
<dbReference type="FunFam" id="3.30.230.80:FF:000002">
    <property type="entry name" value="Molecular chaperone HtpG"/>
    <property type="match status" value="1"/>
</dbReference>
<dbReference type="FunFam" id="3.30.565.10:FF:000009">
    <property type="entry name" value="Molecular chaperone HtpG"/>
    <property type="match status" value="1"/>
</dbReference>
<dbReference type="Gene3D" id="3.30.230.80">
    <property type="match status" value="1"/>
</dbReference>
<dbReference type="Gene3D" id="3.40.50.11260">
    <property type="match status" value="1"/>
</dbReference>
<dbReference type="Gene3D" id="1.20.120.790">
    <property type="entry name" value="Heat shock protein 90, C-terminal domain"/>
    <property type="match status" value="1"/>
</dbReference>
<dbReference type="Gene3D" id="3.30.565.10">
    <property type="entry name" value="Histidine kinase-like ATPase, C-terminal domain"/>
    <property type="match status" value="1"/>
</dbReference>
<dbReference type="HAMAP" id="MF_00505">
    <property type="entry name" value="HSP90"/>
    <property type="match status" value="1"/>
</dbReference>
<dbReference type="InterPro" id="IPR036890">
    <property type="entry name" value="HATPase_C_sf"/>
</dbReference>
<dbReference type="InterPro" id="IPR019805">
    <property type="entry name" value="Heat_shock_protein_90_CS"/>
</dbReference>
<dbReference type="InterPro" id="IPR037196">
    <property type="entry name" value="HSP90_C"/>
</dbReference>
<dbReference type="InterPro" id="IPR001404">
    <property type="entry name" value="Hsp90_fam"/>
</dbReference>
<dbReference type="InterPro" id="IPR020575">
    <property type="entry name" value="Hsp90_N"/>
</dbReference>
<dbReference type="InterPro" id="IPR020568">
    <property type="entry name" value="Ribosomal_Su5_D2-typ_SF"/>
</dbReference>
<dbReference type="NCBIfam" id="NF003555">
    <property type="entry name" value="PRK05218.1"/>
    <property type="match status" value="1"/>
</dbReference>
<dbReference type="PANTHER" id="PTHR11528">
    <property type="entry name" value="HEAT SHOCK PROTEIN 90 FAMILY MEMBER"/>
    <property type="match status" value="1"/>
</dbReference>
<dbReference type="Pfam" id="PF13589">
    <property type="entry name" value="HATPase_c_3"/>
    <property type="match status" value="1"/>
</dbReference>
<dbReference type="Pfam" id="PF00183">
    <property type="entry name" value="HSP90"/>
    <property type="match status" value="1"/>
</dbReference>
<dbReference type="PIRSF" id="PIRSF002583">
    <property type="entry name" value="Hsp90"/>
    <property type="match status" value="1"/>
</dbReference>
<dbReference type="PRINTS" id="PR00775">
    <property type="entry name" value="HEATSHOCK90"/>
</dbReference>
<dbReference type="SMART" id="SM00387">
    <property type="entry name" value="HATPase_c"/>
    <property type="match status" value="1"/>
</dbReference>
<dbReference type="SUPFAM" id="SSF55874">
    <property type="entry name" value="ATPase domain of HSP90 chaperone/DNA topoisomerase II/histidine kinase"/>
    <property type="match status" value="1"/>
</dbReference>
<dbReference type="SUPFAM" id="SSF110942">
    <property type="entry name" value="HSP90 C-terminal domain"/>
    <property type="match status" value="1"/>
</dbReference>
<dbReference type="SUPFAM" id="SSF54211">
    <property type="entry name" value="Ribosomal protein S5 domain 2-like"/>
    <property type="match status" value="1"/>
</dbReference>
<dbReference type="PROSITE" id="PS00298">
    <property type="entry name" value="HSP90"/>
    <property type="match status" value="1"/>
</dbReference>
<evidence type="ECO:0000255" key="1">
    <source>
        <dbReference type="HAMAP-Rule" id="MF_00505"/>
    </source>
</evidence>